<protein>
    <recommendedName>
        <fullName evidence="1">Large ribosomal subunit protein uL23</fullName>
    </recommendedName>
    <alternativeName>
        <fullName evidence="2">50S ribosomal protein L23</fullName>
    </alternativeName>
</protein>
<proteinExistence type="inferred from homology"/>
<sequence length="101" mass="11354">MSVIYNKDPRDVIIRPVVSEKSYGLIDEGKYTFQVDPSANKTEIKYAIEHIFGVKVASVNTLNRPGKRKRTRFGWGQRKATKRAVVSLREGSIDIFGGPLS</sequence>
<accession>B2GIZ5</accession>
<feature type="chain" id="PRO_1000144578" description="Large ribosomal subunit protein uL23">
    <location>
        <begin position="1"/>
        <end position="101"/>
    </location>
</feature>
<keyword id="KW-1185">Reference proteome</keyword>
<keyword id="KW-0687">Ribonucleoprotein</keyword>
<keyword id="KW-0689">Ribosomal protein</keyword>
<keyword id="KW-0694">RNA-binding</keyword>
<keyword id="KW-0699">rRNA-binding</keyword>
<evidence type="ECO:0000255" key="1">
    <source>
        <dbReference type="HAMAP-Rule" id="MF_01369"/>
    </source>
</evidence>
<evidence type="ECO:0000305" key="2"/>
<dbReference type="EMBL" id="AP009152">
    <property type="protein sequence ID" value="BAG28965.1"/>
    <property type="molecule type" value="Genomic_DNA"/>
</dbReference>
<dbReference type="RefSeq" id="WP_012397690.1">
    <property type="nucleotide sequence ID" value="NZ_VECX01000001.1"/>
</dbReference>
<dbReference type="SMR" id="B2GIZ5"/>
<dbReference type="STRING" id="378753.KRH_06180"/>
<dbReference type="KEGG" id="krh:KRH_06180"/>
<dbReference type="eggNOG" id="COG0089">
    <property type="taxonomic scope" value="Bacteria"/>
</dbReference>
<dbReference type="HOGENOM" id="CLU_037562_3_2_11"/>
<dbReference type="OrthoDB" id="9793353at2"/>
<dbReference type="Proteomes" id="UP000008838">
    <property type="component" value="Chromosome"/>
</dbReference>
<dbReference type="GO" id="GO:1990904">
    <property type="term" value="C:ribonucleoprotein complex"/>
    <property type="evidence" value="ECO:0007669"/>
    <property type="project" value="UniProtKB-KW"/>
</dbReference>
<dbReference type="GO" id="GO:0005840">
    <property type="term" value="C:ribosome"/>
    <property type="evidence" value="ECO:0007669"/>
    <property type="project" value="UniProtKB-KW"/>
</dbReference>
<dbReference type="GO" id="GO:0019843">
    <property type="term" value="F:rRNA binding"/>
    <property type="evidence" value="ECO:0007669"/>
    <property type="project" value="UniProtKB-UniRule"/>
</dbReference>
<dbReference type="GO" id="GO:0003735">
    <property type="term" value="F:structural constituent of ribosome"/>
    <property type="evidence" value="ECO:0007669"/>
    <property type="project" value="InterPro"/>
</dbReference>
<dbReference type="GO" id="GO:0006412">
    <property type="term" value="P:translation"/>
    <property type="evidence" value="ECO:0007669"/>
    <property type="project" value="UniProtKB-UniRule"/>
</dbReference>
<dbReference type="FunFam" id="3.30.70.330:FF:000001">
    <property type="entry name" value="50S ribosomal protein L23"/>
    <property type="match status" value="1"/>
</dbReference>
<dbReference type="Gene3D" id="3.30.70.330">
    <property type="match status" value="1"/>
</dbReference>
<dbReference type="HAMAP" id="MF_01369_B">
    <property type="entry name" value="Ribosomal_uL23_B"/>
    <property type="match status" value="1"/>
</dbReference>
<dbReference type="InterPro" id="IPR012677">
    <property type="entry name" value="Nucleotide-bd_a/b_plait_sf"/>
</dbReference>
<dbReference type="InterPro" id="IPR013025">
    <property type="entry name" value="Ribosomal_uL23-like"/>
</dbReference>
<dbReference type="InterPro" id="IPR012678">
    <property type="entry name" value="Ribosomal_uL23/eL15/eS24_sf"/>
</dbReference>
<dbReference type="NCBIfam" id="NF004363">
    <property type="entry name" value="PRK05738.2-4"/>
    <property type="match status" value="1"/>
</dbReference>
<dbReference type="NCBIfam" id="NF004364">
    <property type="entry name" value="PRK05738.2-5"/>
    <property type="match status" value="1"/>
</dbReference>
<dbReference type="PANTHER" id="PTHR11620">
    <property type="entry name" value="60S RIBOSOMAL PROTEIN L23A"/>
    <property type="match status" value="1"/>
</dbReference>
<dbReference type="Pfam" id="PF00276">
    <property type="entry name" value="Ribosomal_L23"/>
    <property type="match status" value="1"/>
</dbReference>
<dbReference type="SUPFAM" id="SSF54189">
    <property type="entry name" value="Ribosomal proteins S24e, L23 and L15e"/>
    <property type="match status" value="1"/>
</dbReference>
<reference key="1">
    <citation type="journal article" date="2008" name="J. Bacteriol.">
        <title>Complete genome sequence of the soil actinomycete Kocuria rhizophila.</title>
        <authorList>
            <person name="Takarada H."/>
            <person name="Sekine M."/>
            <person name="Kosugi H."/>
            <person name="Matsuo Y."/>
            <person name="Fujisawa T."/>
            <person name="Omata S."/>
            <person name="Kishi E."/>
            <person name="Shimizu A."/>
            <person name="Tsukatani N."/>
            <person name="Tanikawa S."/>
            <person name="Fujita N."/>
            <person name="Harayama S."/>
        </authorList>
    </citation>
    <scope>NUCLEOTIDE SEQUENCE [LARGE SCALE GENOMIC DNA]</scope>
    <source>
        <strain>ATCC 9341 / DSM 348 / NBRC 103217 / DC2201</strain>
    </source>
</reference>
<gene>
    <name evidence="1" type="primary">rplW</name>
    <name type="ordered locus">KRH_06180</name>
</gene>
<organism>
    <name type="scientific">Kocuria rhizophila (strain ATCC 9341 / DSM 348 / NBRC 103217 / DC2201)</name>
    <dbReference type="NCBI Taxonomy" id="378753"/>
    <lineage>
        <taxon>Bacteria</taxon>
        <taxon>Bacillati</taxon>
        <taxon>Actinomycetota</taxon>
        <taxon>Actinomycetes</taxon>
        <taxon>Micrococcales</taxon>
        <taxon>Micrococcaceae</taxon>
        <taxon>Kocuria</taxon>
    </lineage>
</organism>
<name>RL23_KOCRD</name>
<comment type="function">
    <text evidence="1">One of the early assembly proteins it binds 23S rRNA. One of the proteins that surrounds the polypeptide exit tunnel on the outside of the ribosome. Forms the main docking site for trigger factor binding to the ribosome.</text>
</comment>
<comment type="subunit">
    <text evidence="1">Part of the 50S ribosomal subunit. Contacts protein L29, and trigger factor when it is bound to the ribosome.</text>
</comment>
<comment type="similarity">
    <text evidence="1">Belongs to the universal ribosomal protein uL23 family.</text>
</comment>